<sequence length="150" mass="15182">MIPGEILPGEDPVEINPGRPVRTVLVRNTGDRPVQVGSHYHFAAANPALDFDRDLAWGHRLAVPAGTAVRFEPGVEREVDLVPLTGARIVPGLRPESAGPLDGRAVRAGGAVRAGGAVRAGGAVVGDSPAATPGTTGATGDLPGYLGEGS</sequence>
<keyword id="KW-0963">Cytoplasm</keyword>
<keyword id="KW-0378">Hydrolase</keyword>
<keyword id="KW-1185">Reference proteome</keyword>
<name>URE2_FRAAA</name>
<feature type="chain" id="PRO_1000070734" description="Urease subunit beta">
    <location>
        <begin position="1"/>
        <end position="150"/>
    </location>
</feature>
<feature type="region of interest" description="Disordered" evidence="2">
    <location>
        <begin position="122"/>
        <end position="150"/>
    </location>
</feature>
<feature type="compositionally biased region" description="Low complexity" evidence="2">
    <location>
        <begin position="122"/>
        <end position="140"/>
    </location>
</feature>
<comment type="catalytic activity">
    <reaction evidence="1">
        <text>urea + 2 H2O + H(+) = hydrogencarbonate + 2 NH4(+)</text>
        <dbReference type="Rhea" id="RHEA:20557"/>
        <dbReference type="ChEBI" id="CHEBI:15377"/>
        <dbReference type="ChEBI" id="CHEBI:15378"/>
        <dbReference type="ChEBI" id="CHEBI:16199"/>
        <dbReference type="ChEBI" id="CHEBI:17544"/>
        <dbReference type="ChEBI" id="CHEBI:28938"/>
        <dbReference type="EC" id="3.5.1.5"/>
    </reaction>
</comment>
<comment type="pathway">
    <text evidence="1">Nitrogen metabolism; urea degradation; CO(2) and NH(3) from urea (urease route): step 1/1.</text>
</comment>
<comment type="subunit">
    <text evidence="1">Heterotrimer of UreA (gamma), UreB (beta) and UreC (alpha) subunits. Three heterotrimers associate to form the active enzyme.</text>
</comment>
<comment type="subcellular location">
    <subcellularLocation>
        <location evidence="1">Cytoplasm</location>
    </subcellularLocation>
</comment>
<comment type="similarity">
    <text evidence="1">Belongs to the urease beta subunit family.</text>
</comment>
<accession>Q0RQR9</accession>
<reference key="1">
    <citation type="journal article" date="2007" name="Genome Res.">
        <title>Genome characteristics of facultatively symbiotic Frankia sp. strains reflect host range and host plant biogeography.</title>
        <authorList>
            <person name="Normand P."/>
            <person name="Lapierre P."/>
            <person name="Tisa L.S."/>
            <person name="Gogarten J.P."/>
            <person name="Alloisio N."/>
            <person name="Bagnarol E."/>
            <person name="Bassi C.A."/>
            <person name="Berry A.M."/>
            <person name="Bickhart D.M."/>
            <person name="Choisne N."/>
            <person name="Couloux A."/>
            <person name="Cournoyer B."/>
            <person name="Cruveiller S."/>
            <person name="Daubin V."/>
            <person name="Demange N."/>
            <person name="Francino M.P."/>
            <person name="Goltsman E."/>
            <person name="Huang Y."/>
            <person name="Kopp O.R."/>
            <person name="Labarre L."/>
            <person name="Lapidus A."/>
            <person name="Lavire C."/>
            <person name="Marechal J."/>
            <person name="Martinez M."/>
            <person name="Mastronunzio J.E."/>
            <person name="Mullin B.C."/>
            <person name="Niemann J."/>
            <person name="Pujic P."/>
            <person name="Rawnsley T."/>
            <person name="Rouy Z."/>
            <person name="Schenowitz C."/>
            <person name="Sellstedt A."/>
            <person name="Tavares F."/>
            <person name="Tomkins J.P."/>
            <person name="Vallenet D."/>
            <person name="Valverde C."/>
            <person name="Wall L.G."/>
            <person name="Wang Y."/>
            <person name="Medigue C."/>
            <person name="Benson D.R."/>
        </authorList>
    </citation>
    <scope>NUCLEOTIDE SEQUENCE [LARGE SCALE GENOMIC DNA]</scope>
    <source>
        <strain>DSM 45986 / CECT 9034 / ACN14a</strain>
    </source>
</reference>
<gene>
    <name evidence="1" type="primary">ureB</name>
    <name type="ordered locus">FRAAL1448</name>
</gene>
<organism>
    <name type="scientific">Frankia alni (strain DSM 45986 / CECT 9034 / ACN14a)</name>
    <dbReference type="NCBI Taxonomy" id="326424"/>
    <lineage>
        <taxon>Bacteria</taxon>
        <taxon>Bacillati</taxon>
        <taxon>Actinomycetota</taxon>
        <taxon>Actinomycetes</taxon>
        <taxon>Frankiales</taxon>
        <taxon>Frankiaceae</taxon>
        <taxon>Frankia</taxon>
    </lineage>
</organism>
<protein>
    <recommendedName>
        <fullName evidence="1">Urease subunit beta</fullName>
        <ecNumber evidence="1">3.5.1.5</ecNumber>
    </recommendedName>
    <alternativeName>
        <fullName evidence="1">Urea amidohydrolase subunit beta</fullName>
    </alternativeName>
</protein>
<evidence type="ECO:0000255" key="1">
    <source>
        <dbReference type="HAMAP-Rule" id="MF_01954"/>
    </source>
</evidence>
<evidence type="ECO:0000256" key="2">
    <source>
        <dbReference type="SAM" id="MobiDB-lite"/>
    </source>
</evidence>
<dbReference type="EC" id="3.5.1.5" evidence="1"/>
<dbReference type="EMBL" id="CT573213">
    <property type="protein sequence ID" value="CAJ60104.1"/>
    <property type="molecule type" value="Genomic_DNA"/>
</dbReference>
<dbReference type="RefSeq" id="WP_011602638.1">
    <property type="nucleotide sequence ID" value="NC_008278.1"/>
</dbReference>
<dbReference type="SMR" id="Q0RQR9"/>
<dbReference type="STRING" id="326424.FRAAL1448"/>
<dbReference type="KEGG" id="fal:FRAAL1448"/>
<dbReference type="eggNOG" id="COG0832">
    <property type="taxonomic scope" value="Bacteria"/>
</dbReference>
<dbReference type="HOGENOM" id="CLU_129707_1_0_11"/>
<dbReference type="OrthoDB" id="9797217at2"/>
<dbReference type="UniPathway" id="UPA00258">
    <property type="reaction ID" value="UER00370"/>
</dbReference>
<dbReference type="Proteomes" id="UP000000657">
    <property type="component" value="Chromosome"/>
</dbReference>
<dbReference type="GO" id="GO:0035550">
    <property type="term" value="C:urease complex"/>
    <property type="evidence" value="ECO:0007669"/>
    <property type="project" value="InterPro"/>
</dbReference>
<dbReference type="GO" id="GO:0009039">
    <property type="term" value="F:urease activity"/>
    <property type="evidence" value="ECO:0007669"/>
    <property type="project" value="UniProtKB-UniRule"/>
</dbReference>
<dbReference type="GO" id="GO:0043419">
    <property type="term" value="P:urea catabolic process"/>
    <property type="evidence" value="ECO:0007669"/>
    <property type="project" value="UniProtKB-UniRule"/>
</dbReference>
<dbReference type="CDD" id="cd00407">
    <property type="entry name" value="Urease_beta"/>
    <property type="match status" value="1"/>
</dbReference>
<dbReference type="Gene3D" id="2.10.150.10">
    <property type="entry name" value="Urease, beta subunit"/>
    <property type="match status" value="1"/>
</dbReference>
<dbReference type="HAMAP" id="MF_01954">
    <property type="entry name" value="Urease_beta"/>
    <property type="match status" value="1"/>
</dbReference>
<dbReference type="InterPro" id="IPR002019">
    <property type="entry name" value="Urease_beta-like"/>
</dbReference>
<dbReference type="InterPro" id="IPR036461">
    <property type="entry name" value="Urease_betasu_sf"/>
</dbReference>
<dbReference type="InterPro" id="IPR050069">
    <property type="entry name" value="Urease_subunit"/>
</dbReference>
<dbReference type="NCBIfam" id="NF009682">
    <property type="entry name" value="PRK13203.1"/>
    <property type="match status" value="1"/>
</dbReference>
<dbReference type="NCBIfam" id="TIGR00192">
    <property type="entry name" value="urease_beta"/>
    <property type="match status" value="1"/>
</dbReference>
<dbReference type="PANTHER" id="PTHR33569">
    <property type="entry name" value="UREASE"/>
    <property type="match status" value="1"/>
</dbReference>
<dbReference type="PANTHER" id="PTHR33569:SF1">
    <property type="entry name" value="UREASE"/>
    <property type="match status" value="1"/>
</dbReference>
<dbReference type="Pfam" id="PF00699">
    <property type="entry name" value="Urease_beta"/>
    <property type="match status" value="1"/>
</dbReference>
<dbReference type="SUPFAM" id="SSF51278">
    <property type="entry name" value="Urease, beta-subunit"/>
    <property type="match status" value="1"/>
</dbReference>
<proteinExistence type="inferred from homology"/>